<sequence length="20" mass="2303">SNTSHQDFHLFYGDNGMPVH</sequence>
<feature type="chain" id="PRO_0000191309" description="Cytochrome c oxidase subunit 7B-heart, mitochondrial">
    <location>
        <begin position="1"/>
        <end position="20" status="greater than"/>
    </location>
</feature>
<feature type="non-terminal residue">
    <location>
        <position position="20"/>
    </location>
</feature>
<comment type="function">
    <text evidence="1">Component of the cytochrome c oxidase, the last enzyme in the mitochondrial electron transport chain which drives oxidative phosphorylation. The respiratory chain contains 3 multisubunit complexes succinate dehydrogenase (complex II, CII), ubiquinol-cytochrome c oxidoreductase (cytochrome b-c1 complex, complex III, CIII) and cytochrome c oxidase (complex IV, CIV), that cooperate to transfer electrons derived from NADH and succinate to molecular oxygen, creating an electrochemical gradient over the inner membrane that drives transmembrane transport and the ATP synthase. Cytochrome c oxidase is the component of the respiratory chain that catalyzes the reduction of oxygen to water. Electrons originating from reduced cytochrome c in the intermembrane space (IMS) are transferred via the dinuclear copper A center (CU(A)) of subunit 2 and heme A of subunit 1 to the active site in subunit 1, a binuclear center (BNC) formed by heme A3 and copper B (CU(B)). The BNC reduces molecular oxygen to 2 water molecules using 4 electrons from cytochrome c in the IMS and 4 protons from the mitochondrial matrix.</text>
</comment>
<comment type="catalytic activity">
    <reaction>
        <text>4 Fe(II)-[cytochrome c] + O2 + 8 H(+)(in) = 4 Fe(III)-[cytochrome c] + 2 H2O + 4 H(+)(out)</text>
        <dbReference type="Rhea" id="RHEA:11436"/>
        <dbReference type="Rhea" id="RHEA-COMP:10350"/>
        <dbReference type="Rhea" id="RHEA-COMP:14399"/>
        <dbReference type="ChEBI" id="CHEBI:15377"/>
        <dbReference type="ChEBI" id="CHEBI:15378"/>
        <dbReference type="ChEBI" id="CHEBI:15379"/>
        <dbReference type="ChEBI" id="CHEBI:29033"/>
        <dbReference type="ChEBI" id="CHEBI:29034"/>
        <dbReference type="EC" id="7.1.1.9"/>
    </reaction>
</comment>
<comment type="pathway">
    <text evidence="1">Energy metabolism; oxidative phosphorylation.</text>
</comment>
<comment type="subunit">
    <text evidence="1">Component of the cytochrome c oxidase (complex IV, CIV), a multisubunit enzyme composed of 14 subunits. The complex is composed of a catalytic core of 3 subunits MT-CO1, MT-CO2 and MT-CO3, encoded in the mitochondrial DNA, and 11 supernumerary subunits COX4I, COX5A, COX5B, COX6A, COX6B, COX6C, COX7A, COX7B, COX7C, COX8 and NDUFA4, which are encoded in the nuclear genome. The complex exists as a monomer or a dimer and forms supercomplexes (SCs) in the inner mitochondrial membrane with NADH-ubiquinone oxidoreductase (complex I, CI) and ubiquinol-cytochrome c oxidoreductase (cytochrome b-c1 complex, complex III, CIII), resulting in different assemblies (supercomplex SCI(1)III(2)IV(1) and megacomplex MCI(2)III(2)IV(2)).</text>
</comment>
<comment type="subcellular location">
    <subcellularLocation>
        <location evidence="1">Mitochondrion inner membrane</location>
        <topology evidence="1">Single-pass membrane protein</topology>
    </subcellularLocation>
</comment>
<comment type="similarity">
    <text evidence="2">Belongs to the cytochrome c oxidase VIIb family.</text>
</comment>
<reference key="1">
    <citation type="journal article" date="1997" name="Eur. J. Biochem.">
        <title>The subunit structure of cytochrome-c oxidase from tuna heart and liver.</title>
        <authorList>
            <person name="Arnold S."/>
            <person name="Lee I."/>
            <person name="Kim M."/>
            <person name="Song E."/>
            <person name="Linder D."/>
            <person name="Lottspeich F."/>
            <person name="Kadenbach B."/>
        </authorList>
    </citation>
    <scope>PROTEIN SEQUENCE</scope>
    <source>
        <tissue>Heart</tissue>
    </source>
</reference>
<proteinExistence type="evidence at protein level"/>
<keyword id="KW-0903">Direct protein sequencing</keyword>
<keyword id="KW-0472">Membrane</keyword>
<keyword id="KW-0496">Mitochondrion</keyword>
<keyword id="KW-0999">Mitochondrion inner membrane</keyword>
<keyword id="KW-1278">Translocase</keyword>
<protein>
    <recommendedName>
        <fullName>Cytochrome c oxidase subunit 7B-heart, mitochondrial</fullName>
        <ecNumber>7.1.1.9</ecNumber>
    </recommendedName>
    <alternativeName>
        <fullName>Cytochrome c oxidase polypeptide VIIb-heart</fullName>
    </alternativeName>
</protein>
<name>COXN_THUOB</name>
<organism>
    <name type="scientific">Thunnus obesus</name>
    <name type="common">Bigeye tuna</name>
    <dbReference type="NCBI Taxonomy" id="8241"/>
    <lineage>
        <taxon>Eukaryota</taxon>
        <taxon>Metazoa</taxon>
        <taxon>Chordata</taxon>
        <taxon>Craniata</taxon>
        <taxon>Vertebrata</taxon>
        <taxon>Euteleostomi</taxon>
        <taxon>Actinopterygii</taxon>
        <taxon>Neopterygii</taxon>
        <taxon>Teleostei</taxon>
        <taxon>Neoteleostei</taxon>
        <taxon>Acanthomorphata</taxon>
        <taxon>Pelagiaria</taxon>
        <taxon>Scombriformes</taxon>
        <taxon>Scombridae</taxon>
        <taxon>Thunnus</taxon>
    </lineage>
</organism>
<evidence type="ECO:0000250" key="1">
    <source>
        <dbReference type="UniProtKB" id="P13183"/>
    </source>
</evidence>
<evidence type="ECO:0000305" key="2"/>
<accession>P80980</accession>
<dbReference type="EC" id="7.1.1.9"/>
<dbReference type="PIR" id="S77989">
    <property type="entry name" value="S77989"/>
</dbReference>
<dbReference type="UniPathway" id="UPA00705"/>
<dbReference type="GO" id="GO:0005743">
    <property type="term" value="C:mitochondrial inner membrane"/>
    <property type="evidence" value="ECO:0007669"/>
    <property type="project" value="UniProtKB-SubCell"/>
</dbReference>
<dbReference type="GO" id="GO:0004129">
    <property type="term" value="F:cytochrome-c oxidase activity"/>
    <property type="evidence" value="ECO:0007669"/>
    <property type="project" value="UniProtKB-EC"/>
</dbReference>
<dbReference type="GO" id="GO:0006119">
    <property type="term" value="P:oxidative phosphorylation"/>
    <property type="evidence" value="ECO:0007669"/>
    <property type="project" value="UniProtKB-UniPathway"/>
</dbReference>